<reference key="1">
    <citation type="journal article" date="1993" name="Gene">
        <title>Cloning and sequencing of the Lactococcus lactis subsp. lactis groESL operon.</title>
        <authorList>
            <person name="Kim S.G."/>
            <person name="Batt C.A."/>
        </authorList>
    </citation>
    <scope>NUCLEOTIDE SEQUENCE [GENOMIC DNA]</scope>
</reference>
<reference key="2">
    <citation type="journal article" date="2001" name="Genome Res.">
        <title>The complete genome sequence of the lactic acid bacterium Lactococcus lactis ssp. lactis IL1403.</title>
        <authorList>
            <person name="Bolotin A."/>
            <person name="Wincker P."/>
            <person name="Mauger S."/>
            <person name="Jaillon O."/>
            <person name="Malarme K."/>
            <person name="Weissenbach J."/>
            <person name="Ehrlich S.D."/>
            <person name="Sorokin A."/>
        </authorList>
    </citation>
    <scope>NUCLEOTIDE SEQUENCE [LARGE SCALE GENOMIC DNA]</scope>
    <source>
        <strain>IL1403</strain>
    </source>
</reference>
<dbReference type="EC" id="5.6.1.7" evidence="1"/>
<dbReference type="EMBL" id="X71132">
    <property type="protein sequence ID" value="CAA50446.1"/>
    <property type="molecule type" value="Genomic_DNA"/>
</dbReference>
<dbReference type="EMBL" id="AE005176">
    <property type="protein sequence ID" value="AAK04492.1"/>
    <property type="molecule type" value="Genomic_DNA"/>
</dbReference>
<dbReference type="PIR" id="B86674">
    <property type="entry name" value="B86674"/>
</dbReference>
<dbReference type="PIR" id="JN0661">
    <property type="entry name" value="JN0661"/>
</dbReference>
<dbReference type="PIR" id="S32106">
    <property type="entry name" value="S32106"/>
</dbReference>
<dbReference type="RefSeq" id="NP_266550.1">
    <property type="nucleotide sequence ID" value="NC_002662.1"/>
</dbReference>
<dbReference type="RefSeq" id="WP_003131585.1">
    <property type="nucleotide sequence ID" value="NC_002662.1"/>
</dbReference>
<dbReference type="SMR" id="P37282"/>
<dbReference type="MoonProt" id="P37282"/>
<dbReference type="PaxDb" id="272623-L198893"/>
<dbReference type="EnsemblBacteria" id="AAK04492">
    <property type="protein sequence ID" value="AAK04492"/>
    <property type="gene ID" value="L198893"/>
</dbReference>
<dbReference type="KEGG" id="lla:L198893"/>
<dbReference type="PATRIC" id="fig|272623.7.peg.428"/>
<dbReference type="eggNOG" id="COG0459">
    <property type="taxonomic scope" value="Bacteria"/>
</dbReference>
<dbReference type="HOGENOM" id="CLU_016503_3_0_9"/>
<dbReference type="OrthoDB" id="9766614at2"/>
<dbReference type="Proteomes" id="UP000002196">
    <property type="component" value="Chromosome"/>
</dbReference>
<dbReference type="GO" id="GO:0009986">
    <property type="term" value="C:cell surface"/>
    <property type="evidence" value="ECO:0000314"/>
    <property type="project" value="CAFA"/>
</dbReference>
<dbReference type="GO" id="GO:0005737">
    <property type="term" value="C:cytoplasm"/>
    <property type="evidence" value="ECO:0007669"/>
    <property type="project" value="UniProtKB-SubCell"/>
</dbReference>
<dbReference type="GO" id="GO:0005524">
    <property type="term" value="F:ATP binding"/>
    <property type="evidence" value="ECO:0007669"/>
    <property type="project" value="UniProtKB-UniRule"/>
</dbReference>
<dbReference type="GO" id="GO:0140662">
    <property type="term" value="F:ATP-dependent protein folding chaperone"/>
    <property type="evidence" value="ECO:0007669"/>
    <property type="project" value="InterPro"/>
</dbReference>
<dbReference type="GO" id="GO:0016853">
    <property type="term" value="F:isomerase activity"/>
    <property type="evidence" value="ECO:0007669"/>
    <property type="project" value="UniProtKB-KW"/>
</dbReference>
<dbReference type="GO" id="GO:2001065">
    <property type="term" value="F:mannan binding"/>
    <property type="evidence" value="ECO:0000314"/>
    <property type="project" value="CAFA"/>
</dbReference>
<dbReference type="GO" id="GO:0051082">
    <property type="term" value="F:unfolded protein binding"/>
    <property type="evidence" value="ECO:0007669"/>
    <property type="project" value="UniProtKB-UniRule"/>
</dbReference>
<dbReference type="GO" id="GO:0042026">
    <property type="term" value="P:protein refolding"/>
    <property type="evidence" value="ECO:0007669"/>
    <property type="project" value="UniProtKB-UniRule"/>
</dbReference>
<dbReference type="CDD" id="cd03344">
    <property type="entry name" value="GroEL"/>
    <property type="match status" value="1"/>
</dbReference>
<dbReference type="FunFam" id="3.50.7.10:FF:000001">
    <property type="entry name" value="60 kDa chaperonin"/>
    <property type="match status" value="1"/>
</dbReference>
<dbReference type="Gene3D" id="3.50.7.10">
    <property type="entry name" value="GroEL"/>
    <property type="match status" value="1"/>
</dbReference>
<dbReference type="Gene3D" id="1.10.560.10">
    <property type="entry name" value="GroEL-like equatorial domain"/>
    <property type="match status" value="1"/>
</dbReference>
<dbReference type="Gene3D" id="3.30.260.10">
    <property type="entry name" value="TCP-1-like chaperonin intermediate domain"/>
    <property type="match status" value="1"/>
</dbReference>
<dbReference type="HAMAP" id="MF_00600">
    <property type="entry name" value="CH60"/>
    <property type="match status" value="1"/>
</dbReference>
<dbReference type="InterPro" id="IPR018370">
    <property type="entry name" value="Chaperonin_Cpn60_CS"/>
</dbReference>
<dbReference type="InterPro" id="IPR001844">
    <property type="entry name" value="Cpn60/GroEL"/>
</dbReference>
<dbReference type="InterPro" id="IPR002423">
    <property type="entry name" value="Cpn60/GroEL/TCP-1"/>
</dbReference>
<dbReference type="InterPro" id="IPR027409">
    <property type="entry name" value="GroEL-like_apical_dom_sf"/>
</dbReference>
<dbReference type="InterPro" id="IPR027413">
    <property type="entry name" value="GROEL-like_equatorial_sf"/>
</dbReference>
<dbReference type="InterPro" id="IPR027410">
    <property type="entry name" value="TCP-1-like_intermed_sf"/>
</dbReference>
<dbReference type="NCBIfam" id="TIGR02348">
    <property type="entry name" value="GroEL"/>
    <property type="match status" value="1"/>
</dbReference>
<dbReference type="NCBIfam" id="NF000592">
    <property type="entry name" value="PRK00013.1"/>
    <property type="match status" value="1"/>
</dbReference>
<dbReference type="NCBIfam" id="NF009487">
    <property type="entry name" value="PRK12849.1"/>
    <property type="match status" value="1"/>
</dbReference>
<dbReference type="NCBIfam" id="NF009488">
    <property type="entry name" value="PRK12850.1"/>
    <property type="match status" value="1"/>
</dbReference>
<dbReference type="NCBIfam" id="NF009489">
    <property type="entry name" value="PRK12851.1"/>
    <property type="match status" value="1"/>
</dbReference>
<dbReference type="PANTHER" id="PTHR45633">
    <property type="entry name" value="60 KDA HEAT SHOCK PROTEIN, MITOCHONDRIAL"/>
    <property type="match status" value="1"/>
</dbReference>
<dbReference type="Pfam" id="PF00118">
    <property type="entry name" value="Cpn60_TCP1"/>
    <property type="match status" value="1"/>
</dbReference>
<dbReference type="PRINTS" id="PR00298">
    <property type="entry name" value="CHAPERONIN60"/>
</dbReference>
<dbReference type="SUPFAM" id="SSF52029">
    <property type="entry name" value="GroEL apical domain-like"/>
    <property type="match status" value="1"/>
</dbReference>
<dbReference type="SUPFAM" id="SSF48592">
    <property type="entry name" value="GroEL equatorial domain-like"/>
    <property type="match status" value="1"/>
</dbReference>
<dbReference type="SUPFAM" id="SSF54849">
    <property type="entry name" value="GroEL-intermediate domain like"/>
    <property type="match status" value="1"/>
</dbReference>
<dbReference type="PROSITE" id="PS00296">
    <property type="entry name" value="CHAPERONINS_CPN60"/>
    <property type="match status" value="1"/>
</dbReference>
<gene>
    <name evidence="1" type="primary">groEL</name>
    <name evidence="1" type="synonym">groL</name>
    <name type="synonym">mopA</name>
    <name type="ordered locus">LL0394</name>
    <name type="ORF">L198893</name>
</gene>
<evidence type="ECO:0000255" key="1">
    <source>
        <dbReference type="HAMAP-Rule" id="MF_00600"/>
    </source>
</evidence>
<evidence type="ECO:0000305" key="2"/>
<organism>
    <name type="scientific">Lactococcus lactis subsp. lactis (strain IL1403)</name>
    <name type="common">Streptococcus lactis</name>
    <dbReference type="NCBI Taxonomy" id="272623"/>
    <lineage>
        <taxon>Bacteria</taxon>
        <taxon>Bacillati</taxon>
        <taxon>Bacillota</taxon>
        <taxon>Bacilli</taxon>
        <taxon>Lactobacillales</taxon>
        <taxon>Streptococcaceae</taxon>
        <taxon>Lactococcus</taxon>
    </lineage>
</organism>
<comment type="function">
    <text evidence="1">Together with its co-chaperonin GroES, plays an essential role in assisting protein folding. The GroEL-GroES system forms a nano-cage that allows encapsulation of the non-native substrate proteins and provides a physical environment optimized to promote and accelerate protein folding.</text>
</comment>
<comment type="catalytic activity">
    <reaction evidence="1">
        <text>ATP + H2O + a folded polypeptide = ADP + phosphate + an unfolded polypeptide.</text>
        <dbReference type="EC" id="5.6.1.7"/>
    </reaction>
</comment>
<comment type="subunit">
    <text evidence="1">Forms a cylinder of 14 subunits composed of two heptameric rings stacked back-to-back. Interacts with the co-chaperonin GroES.</text>
</comment>
<comment type="subcellular location">
    <subcellularLocation>
        <location evidence="1">Cytoplasm</location>
    </subcellularLocation>
</comment>
<comment type="similarity">
    <text evidence="1">Belongs to the chaperonin (HSP60) family.</text>
</comment>
<accession>P37282</accession>
<keyword id="KW-0067">ATP-binding</keyword>
<keyword id="KW-0143">Chaperone</keyword>
<keyword id="KW-0963">Cytoplasm</keyword>
<keyword id="KW-0413">Isomerase</keyword>
<keyword id="KW-0547">Nucleotide-binding</keyword>
<keyword id="KW-1185">Reference proteome</keyword>
<sequence>MSKDIKFSSDARTAMMRGIDILADTVKTTLGPKGRNVVLEKSYGSPLITNDGVTIAKEIELEDHFENMGAKLVSEVASKTNDIAGDGTTTATVLTQAIVREGLKNVTAGANPVGIRRGIELAAETAVASIKEMAIPVHDKSAIAQVATVSSRSEKVGEYISDAMERVGSDGVITIEESKGMQTELDVVEGMQFDRGYLSQYMVSNTEKMVAELDNPYILITDKKISNIQEILPLLEQILKTNRPLLIVADDVDGEALPTLVLNKIKGVFNVVAVKAPGFGDRRKAQLEDLAILTGGTVITEELGLDLKDATLEALGQAAKATVDKDHTTIVEGAGSADAISDRVAIIKAQIEKTTSDFDREKLQERLAKLAGGVAVVKVGAATETELKAMKLLIEDALNATRAAVEEGIVSGGGTALVNAIAALDKLSEEGDIQTGINIVRRALEEPVRQIAANAGYEGSVIIDKLRSEEVGTGFNAATGQWVNMIEEGIVDPAKVTRSALQNAASVAGLILTTEAVVANKPEPAAPAMPPMDPSMGMGGMM</sequence>
<proteinExistence type="inferred from homology"/>
<feature type="chain" id="PRO_0000063400" description="Chaperonin GroEL">
    <location>
        <begin position="1"/>
        <end position="542"/>
    </location>
</feature>
<feature type="binding site" evidence="1">
    <location>
        <begin position="29"/>
        <end position="32"/>
    </location>
    <ligand>
        <name>ATP</name>
        <dbReference type="ChEBI" id="CHEBI:30616"/>
    </ligand>
</feature>
<feature type="binding site" evidence="1">
    <location>
        <begin position="86"/>
        <end position="90"/>
    </location>
    <ligand>
        <name>ATP</name>
        <dbReference type="ChEBI" id="CHEBI:30616"/>
    </ligand>
</feature>
<feature type="binding site" evidence="1">
    <location>
        <position position="413"/>
    </location>
    <ligand>
        <name>ATP</name>
        <dbReference type="ChEBI" id="CHEBI:30616"/>
    </ligand>
</feature>
<feature type="binding site" evidence="1">
    <location>
        <begin position="476"/>
        <end position="478"/>
    </location>
    <ligand>
        <name>ATP</name>
        <dbReference type="ChEBI" id="CHEBI:30616"/>
    </ligand>
</feature>
<feature type="binding site" evidence="1">
    <location>
        <position position="492"/>
    </location>
    <ligand>
        <name>ATP</name>
        <dbReference type="ChEBI" id="CHEBI:30616"/>
    </ligand>
</feature>
<feature type="sequence conflict" description="In Ref. 1; CAA50446." evidence="2" ref="1">
    <original>D</original>
    <variation>V</variation>
    <location>
        <position position="63"/>
    </location>
</feature>
<feature type="sequence conflict" description="In Ref. 1; CAA50446." evidence="2" ref="1">
    <original>T</original>
    <variation>N</variation>
    <location>
        <position position="89"/>
    </location>
</feature>
<feature type="sequence conflict" description="In Ref. 1; CAA50446." evidence="2" ref="1">
    <original>D</original>
    <variation>H</variation>
    <location>
        <position position="289"/>
    </location>
</feature>
<feature type="sequence conflict" description="In Ref. 1; CAA50446." evidence="2" ref="1">
    <original>L</original>
    <variation>V</variation>
    <location>
        <position position="367"/>
    </location>
</feature>
<feature type="sequence conflict" description="In Ref. 1; CAA50446." evidence="2" ref="1">
    <original>M</original>
    <variation>I</variation>
    <location>
        <position position="542"/>
    </location>
</feature>
<protein>
    <recommendedName>
        <fullName evidence="1">Chaperonin GroEL</fullName>
        <ecNumber evidence="1">5.6.1.7</ecNumber>
    </recommendedName>
    <alternativeName>
        <fullName evidence="1">60 kDa chaperonin</fullName>
    </alternativeName>
    <alternativeName>
        <fullName evidence="1">Chaperonin-60</fullName>
        <shortName evidence="1">Cpn60</shortName>
    </alternativeName>
</protein>
<name>CH60_LACLA</name>